<evidence type="ECO:0000305" key="1"/>
<organism>
    <name type="scientific">Pisum sativum</name>
    <name type="common">Garden pea</name>
    <name type="synonym">Lathyrus oleraceus</name>
    <dbReference type="NCBI Taxonomy" id="3888"/>
    <lineage>
        <taxon>Eukaryota</taxon>
        <taxon>Viridiplantae</taxon>
        <taxon>Streptophyta</taxon>
        <taxon>Embryophyta</taxon>
        <taxon>Tracheophyta</taxon>
        <taxon>Spermatophyta</taxon>
        <taxon>Magnoliopsida</taxon>
        <taxon>eudicotyledons</taxon>
        <taxon>Gunneridae</taxon>
        <taxon>Pentapetalae</taxon>
        <taxon>rosids</taxon>
        <taxon>fabids</taxon>
        <taxon>Fabales</taxon>
        <taxon>Fabaceae</taxon>
        <taxon>Papilionoideae</taxon>
        <taxon>50 kb inversion clade</taxon>
        <taxon>NPAAA clade</taxon>
        <taxon>Hologalegina</taxon>
        <taxon>IRL clade</taxon>
        <taxon>Fabeae</taxon>
        <taxon>Pisum</taxon>
    </lineage>
</organism>
<name>CHIB_PEA</name>
<accession>P21227</accession>
<comment type="function">
    <text>Defense against chitin-containing fungal pathogens.</text>
</comment>
<comment type="catalytic activity">
    <reaction>
        <text>Random endo-hydrolysis of N-acetyl-beta-D-glucosaminide (1-&gt;4)-beta-linkages in chitin and chitodextrins.</text>
        <dbReference type="EC" id="3.2.1.14"/>
    </reaction>
</comment>
<comment type="induction">
    <text>By infection with the fungal pathogen Ascochyta pisi.</text>
</comment>
<comment type="similarity">
    <text evidence="1">Belongs to the glycosyl hydrolase 19 family. Chitinase class I subfamily.</text>
</comment>
<dbReference type="EC" id="3.2.1.14"/>
<dbReference type="GO" id="GO:0008061">
    <property type="term" value="F:chitin binding"/>
    <property type="evidence" value="ECO:0007669"/>
    <property type="project" value="UniProtKB-KW"/>
</dbReference>
<dbReference type="GO" id="GO:0008843">
    <property type="term" value="F:endochitinase activity"/>
    <property type="evidence" value="ECO:0007669"/>
    <property type="project" value="UniProtKB-EC"/>
</dbReference>
<dbReference type="GO" id="GO:0006032">
    <property type="term" value="P:chitin catabolic process"/>
    <property type="evidence" value="ECO:0007669"/>
    <property type="project" value="UniProtKB-KW"/>
</dbReference>
<dbReference type="GO" id="GO:0006952">
    <property type="term" value="P:defense response"/>
    <property type="evidence" value="ECO:0007669"/>
    <property type="project" value="UniProtKB-KW"/>
</dbReference>
<dbReference type="GO" id="GO:0000272">
    <property type="term" value="P:polysaccharide catabolic process"/>
    <property type="evidence" value="ECO:0007669"/>
    <property type="project" value="UniProtKB-KW"/>
</dbReference>
<dbReference type="Gene3D" id="3.30.60.10">
    <property type="entry name" value="Endochitinase-like"/>
    <property type="match status" value="1"/>
</dbReference>
<dbReference type="InterPro" id="IPR001002">
    <property type="entry name" value="Chitin-bd_1"/>
</dbReference>
<dbReference type="InterPro" id="IPR036861">
    <property type="entry name" value="Endochitinase-like_sf"/>
</dbReference>
<dbReference type="Pfam" id="PF00187">
    <property type="entry name" value="Chitin_bind_1"/>
    <property type="match status" value="1"/>
</dbReference>
<dbReference type="SUPFAM" id="SSF57016">
    <property type="entry name" value="Plant lectins/antimicrobial peptides"/>
    <property type="match status" value="1"/>
</dbReference>
<proteinExistence type="evidence at protein level"/>
<sequence>EQCGRQAGGATCPNNLCCSQYGY</sequence>
<protein>
    <recommendedName>
        <fullName>Endochitinase B</fullName>
        <ecNumber>3.2.1.14</ecNumber>
    </recommendedName>
</protein>
<reference key="1">
    <citation type="journal article" date="1991" name="Planta">
        <title>Induction, purification and characterization of chitinase isolated from pea leaves inoculated with Ascochyta pisi.</title>
        <authorList>
            <person name="Vad K."/>
            <person name="Mikkelsen J.D."/>
            <person name="Collinge D.B."/>
        </authorList>
    </citation>
    <scope>PROTEIN SEQUENCE</scope>
    <source>
        <strain>cv. Birte</strain>
        <tissue>Leaf</tissue>
    </source>
</reference>
<feature type="chain" id="PRO_0000124829" description="Endochitinase B">
    <location>
        <begin position="1"/>
        <end position="23" status="greater than"/>
    </location>
</feature>
<feature type="non-terminal residue">
    <location>
        <position position="23"/>
    </location>
</feature>
<keyword id="KW-0119">Carbohydrate metabolism</keyword>
<keyword id="KW-0146">Chitin degradation</keyword>
<keyword id="KW-0147">Chitin-binding</keyword>
<keyword id="KW-0903">Direct protein sequencing</keyword>
<keyword id="KW-0326">Glycosidase</keyword>
<keyword id="KW-0378">Hydrolase</keyword>
<keyword id="KW-0611">Plant defense</keyword>
<keyword id="KW-0624">Polysaccharide degradation</keyword>